<sequence>MKPAYPPLLLQMSPAYTPRPLKNLFTANQCWAHLLEEGGLRDIEVETVTKMLACGTSILGVKHYTCGNHSCPHVKYLCNTCHCRACPSCGKKATDQWITVQNNRLPDCPWQHLVFTLPDTLWPLFFYNRWLLDALFRLAADNLIYAAKRRGLRVGIFGALHTYGRRLNWHPHVHLSVTAGGLDEQGVWKNLSFHKEALRRRWMWLVRDYLLGQPLSQLTMPPPLAHILCESDWRRLILAAGGQHWHIHLSKKTKNGRKTVNYLGRYLKKPPISGSRLAHYTNGATLRFTYLDHRTQAYQQETLSQADMLFRVVQHIPEKHFRMIRYFGFLANRVCGQYLPKVYEALKMATPGPTPKLYFAPMAKAFLNVDPFRCVLCGARMVYTAAISGLTVQGLNLNAQAIAQMRYVKP</sequence>
<protein>
    <recommendedName>
        <fullName>Transposase for insertion sequence element IS801</fullName>
    </recommendedName>
</protein>
<evidence type="ECO:0000305" key="1"/>
<keyword id="KW-0233">DNA recombination</keyword>
<keyword id="KW-0238">DNA-binding</keyword>
<keyword id="KW-0814">Transposable element</keyword>
<keyword id="KW-0815">Transposition</keyword>
<comment type="function">
    <text>Involved in the transposition of the insertion sequence.</text>
</comment>
<comment type="similarity">
    <text evidence="1">Belongs to the transposase 32 family.</text>
</comment>
<comment type="caution">
    <text evidence="1">It is uncertain whether Met-1 or Val-100 is the initiator.</text>
</comment>
<organism>
    <name type="scientific">Pseudomonas savastanoi pv. phaseolicola</name>
    <name type="common">Pseudomonas syringae pv. phaseolicola</name>
    <dbReference type="NCBI Taxonomy" id="319"/>
    <lineage>
        <taxon>Bacteria</taxon>
        <taxon>Pseudomonadati</taxon>
        <taxon>Pseudomonadota</taxon>
        <taxon>Gammaproteobacteria</taxon>
        <taxon>Pseudomonadales</taxon>
        <taxon>Pseudomonadaceae</taxon>
        <taxon>Pseudomonas</taxon>
    </lineage>
</organism>
<accession>P24607</accession>
<reference key="1">
    <citation type="journal article" date="1991" name="Mol. Microbiol.">
        <title>IS801, an insertion sequence element isolated from Pseudomonas syringae pathovar phaseolicola.</title>
        <authorList>
            <person name="Romantschuk M."/>
            <person name="Richter G.Y."/>
            <person name="Mukhopadhyay P."/>
            <person name="Mills D."/>
        </authorList>
    </citation>
    <scope>NUCLEOTIDE SEQUENCE [GENOMIC DNA]</scope>
    <source>
        <strain>LR781</strain>
    </source>
</reference>
<name>T801_PSESH</name>
<feature type="chain" id="PRO_0000075448" description="Transposase for insertion sequence element IS801">
    <location>
        <begin position="1"/>
        <end position="410"/>
    </location>
</feature>
<dbReference type="EMBL" id="X57269">
    <property type="protein sequence ID" value="CAA40540.1"/>
    <property type="molecule type" value="Genomic_DNA"/>
</dbReference>
<dbReference type="PIR" id="S15163">
    <property type="entry name" value="S15163"/>
</dbReference>
<dbReference type="GO" id="GO:0003677">
    <property type="term" value="F:DNA binding"/>
    <property type="evidence" value="ECO:0007669"/>
    <property type="project" value="UniProtKB-KW"/>
</dbReference>
<dbReference type="GO" id="GO:0004803">
    <property type="term" value="F:transposase activity"/>
    <property type="evidence" value="ECO:0007669"/>
    <property type="project" value="InterPro"/>
</dbReference>
<dbReference type="GO" id="GO:0006313">
    <property type="term" value="P:DNA transposition"/>
    <property type="evidence" value="ECO:0007669"/>
    <property type="project" value="InterPro"/>
</dbReference>
<dbReference type="InterPro" id="IPR054832">
    <property type="entry name" value="transpos_IS91"/>
</dbReference>
<dbReference type="InterPro" id="IPR007069">
    <property type="entry name" value="Transposase_32"/>
</dbReference>
<dbReference type="InterPro" id="IPR026889">
    <property type="entry name" value="Zn_Tnp"/>
</dbReference>
<dbReference type="NCBIfam" id="NF033538">
    <property type="entry name" value="transpos_IS91"/>
    <property type="match status" value="1"/>
</dbReference>
<dbReference type="PANTHER" id="PTHR37023:SF1">
    <property type="entry name" value="ISSOD25 TRANSPOSASE TNPA_ISSOD25"/>
    <property type="match status" value="1"/>
</dbReference>
<dbReference type="PANTHER" id="PTHR37023">
    <property type="entry name" value="TRANSPOSASE"/>
    <property type="match status" value="1"/>
</dbReference>
<dbReference type="Pfam" id="PF04986">
    <property type="entry name" value="Y2_Tnp"/>
    <property type="match status" value="1"/>
</dbReference>
<dbReference type="Pfam" id="PF14319">
    <property type="entry name" value="Zn_Tnp_IS91"/>
    <property type="match status" value="1"/>
</dbReference>
<proteinExistence type="inferred from homology"/>